<evidence type="ECO:0000250" key="1">
    <source>
        <dbReference type="UniProtKB" id="P02893"/>
    </source>
</evidence>
<evidence type="ECO:0000250" key="2">
    <source>
        <dbReference type="UniProtKB" id="P19597"/>
    </source>
</evidence>
<evidence type="ECO:0000250" key="3">
    <source>
        <dbReference type="UniProtKB" id="P23093"/>
    </source>
</evidence>
<evidence type="ECO:0000250" key="4">
    <source>
        <dbReference type="UniProtKB" id="Q7K740"/>
    </source>
</evidence>
<evidence type="ECO:0000255" key="5"/>
<evidence type="ECO:0000255" key="6">
    <source>
        <dbReference type="PROSITE-ProRule" id="PRU00210"/>
    </source>
</evidence>
<evidence type="ECO:0000256" key="7">
    <source>
        <dbReference type="SAM" id="MobiDB-lite"/>
    </source>
</evidence>
<evidence type="ECO:0000269" key="8">
    <source>
    </source>
</evidence>
<evidence type="ECO:0000303" key="9">
    <source>
    </source>
</evidence>
<evidence type="ECO:0000305" key="10"/>
<evidence type="ECO:0000305" key="11">
    <source>
    </source>
</evidence>
<comment type="function">
    <text evidence="1 3">Essential sporozoite protein (By similarity). In the mosquito vector, required for sporozoite development in the oocyst, migration through the vector hemolymph and entry into the vector salivary glands (By similarity). In the vertebrate host, required for sporozoite migration through the host dermis and infection of host hepatocytes (By similarity). Binds to highly sulfated heparan sulfate proteoglycans (HSPGs) on the surface of host hepatocytes (By similarity).</text>
</comment>
<comment type="function">
    <molecule>Circumsporozoite protein C-terminus</molecule>
    <text evidence="3">In the vertebrate host, binds to highly sulfated heparan sulfate proteoglycans (HSPGs) on the surface of host hepatocytes and is required for sporozoite invasion of the host hepatocytes.</text>
</comment>
<comment type="subcellular location">
    <subcellularLocation>
        <location evidence="2">Cell membrane</location>
        <topology evidence="5">Lipid-anchor</topology>
        <topology evidence="5">GPI-anchor</topology>
    </subcellularLocation>
    <subcellularLocation>
        <location evidence="3">Cytoplasm</location>
    </subcellularLocation>
    <text evidence="3">Localizes to the cytoplasm and the cell membrane in oocysts at day 6 post infection and then gradually distributes over the entire cell surface of the sporoblast and the budding sporozoites.</text>
</comment>
<comment type="domain">
    <text evidence="3 4">The N-terminus is involved in the initial binding to heparan sulfate proteoglycans (HSPGs) on the surface of host hepatocytes (By similarity). The N-terminus masks the TSP type-1 (TSR) domain which maintains the sporozoites in a migratory state, enabling them to complete their journey to the salivary gland in the mosquito vector and then to the host liver. The unmasking of the TSP type-1 (TSR) domain when the sporozoite interacts with the host hepatocyte also protects sporozoites from host antibodies (By similarity).</text>
</comment>
<comment type="domain">
    <text evidence="3">The TSP type-1 (TSR) domain is required for sporozoite development and invasion. CSP has two conformational states, an adhesive conformation in which the TSP type-1 (TSR) domain is exposed and a nonadhesive conformation in which the TSR is masked by the N-terminus. TSR-exposed conformation occurs during sporozoite development in the oocyst in the mosquito vector and during host hepatocyte invasion. TSR-masked conformation occurs during sporozoite migration through the hemolymph to salivary glands in the mosquito vector and in the host dermis.</text>
</comment>
<comment type="domain">
    <text evidence="3">The GPI-anchor is essential for cell membrane localization and for sporozoite formation inside the oocyst.</text>
</comment>
<comment type="PTM">
    <text evidence="1 3">During host cell invasion, proteolytically cleaved at the cell membrane in the region I by a papain-like cysteine protease of parasite origin (By similarity). Cleavage is triggered by the sporozoite contact with highly sulfated heparan sulfate proteoglycans (HSPGs) present on the host hepatocyte cell surface (By similarity). Cleavage exposes the TSP type-1 (TSR) domain and is required for productive invasion of host hepatocytes but not for adhesion to the host cell membrane (By similarity). Cleavage is dispensable for sporozoite development in the oocyst, motility and for traversal of host and vector cells (By similarity).</text>
</comment>
<comment type="PTM">
    <text evidence="2">O-glycosylated; maybe by POFUT2.</text>
</comment>
<comment type="polymorphism">
    <text evidence="8">The sequence of the repeats varies across Plasmodium species and strains.</text>
</comment>
<comment type="similarity">
    <text evidence="10">Belongs to the plasmodium circumsporozoite protein family.</text>
</comment>
<feature type="signal peptide" evidence="5">
    <location>
        <begin position="1"/>
        <end position="18"/>
    </location>
</feature>
<feature type="chain" id="PRO_0000024528" description="Circumsporozoite protein" evidence="5">
    <location>
        <begin position="19"/>
        <end position="401"/>
    </location>
</feature>
<feature type="chain" id="PRO_0000455490" description="Circumsporozoite protein C-terminus" evidence="3">
    <location>
        <begin status="unknown"/>
        <end position="401"/>
    </location>
</feature>
<feature type="propeptide" id="PRO_0000455491" description="Removed in mature form" evidence="5">
    <location>
        <begin position="402"/>
        <end position="424"/>
    </location>
</feature>
<feature type="repeat" description="1" evidence="11">
    <location>
        <begin position="123"/>
        <end position="126"/>
    </location>
</feature>
<feature type="repeat" description="2" evidence="11">
    <location>
        <begin position="127"/>
        <end position="130"/>
    </location>
</feature>
<feature type="repeat" description="3" evidence="11">
    <location>
        <begin position="131"/>
        <end position="134"/>
    </location>
</feature>
<feature type="repeat" description="4" evidence="11">
    <location>
        <begin position="135"/>
        <end position="138"/>
    </location>
</feature>
<feature type="repeat" description="5" evidence="11">
    <location>
        <begin position="139"/>
        <end position="142"/>
    </location>
</feature>
<feature type="repeat" description="6" evidence="11">
    <location>
        <begin position="143"/>
        <end position="146"/>
    </location>
</feature>
<feature type="repeat" description="7" evidence="11">
    <location>
        <begin position="147"/>
        <end position="150"/>
    </location>
</feature>
<feature type="repeat" description="8" evidence="11">
    <location>
        <begin position="151"/>
        <end position="154"/>
    </location>
</feature>
<feature type="repeat" description="9" evidence="11">
    <location>
        <begin position="155"/>
        <end position="158"/>
    </location>
</feature>
<feature type="repeat" description="10" evidence="11">
    <location>
        <begin position="159"/>
        <end position="162"/>
    </location>
</feature>
<feature type="repeat" description="11" evidence="11">
    <location>
        <begin position="163"/>
        <end position="166"/>
    </location>
</feature>
<feature type="repeat" description="12" evidence="11">
    <location>
        <begin position="167"/>
        <end position="170"/>
    </location>
</feature>
<feature type="repeat" description="13" evidence="11">
    <location>
        <begin position="171"/>
        <end position="174"/>
    </location>
</feature>
<feature type="repeat" description="14" evidence="11">
    <location>
        <begin position="175"/>
        <end position="178"/>
    </location>
</feature>
<feature type="repeat" description="15" evidence="11">
    <location>
        <begin position="179"/>
        <end position="182"/>
    </location>
</feature>
<feature type="repeat" description="16" evidence="11">
    <location>
        <begin position="183"/>
        <end position="186"/>
    </location>
</feature>
<feature type="repeat" description="17" evidence="11">
    <location>
        <begin position="187"/>
        <end position="190"/>
    </location>
</feature>
<feature type="repeat" description="18" evidence="11">
    <location>
        <begin position="191"/>
        <end position="194"/>
    </location>
</feature>
<feature type="repeat" description="19" evidence="11">
    <location>
        <begin position="195"/>
        <end position="198"/>
    </location>
</feature>
<feature type="repeat" description="20" evidence="11">
    <location>
        <begin position="199"/>
        <end position="202"/>
    </location>
</feature>
<feature type="repeat" description="21" evidence="11">
    <location>
        <begin position="203"/>
        <end position="206"/>
    </location>
</feature>
<feature type="repeat" description="22" evidence="11">
    <location>
        <begin position="207"/>
        <end position="210"/>
    </location>
</feature>
<feature type="repeat" description="23" evidence="11">
    <location>
        <begin position="211"/>
        <end position="214"/>
    </location>
</feature>
<feature type="repeat" description="24" evidence="11">
    <location>
        <begin position="215"/>
        <end position="218"/>
    </location>
</feature>
<feature type="repeat" description="25" evidence="11">
    <location>
        <begin position="219"/>
        <end position="222"/>
    </location>
</feature>
<feature type="repeat" description="26" evidence="11">
    <location>
        <begin position="223"/>
        <end position="226"/>
    </location>
</feature>
<feature type="repeat" description="27" evidence="11">
    <location>
        <begin position="227"/>
        <end position="230"/>
    </location>
</feature>
<feature type="repeat" description="28" evidence="11">
    <location>
        <begin position="231"/>
        <end position="234"/>
    </location>
</feature>
<feature type="repeat" description="29" evidence="11">
    <location>
        <begin position="235"/>
        <end position="238"/>
    </location>
</feature>
<feature type="repeat" description="30" evidence="11">
    <location>
        <begin position="239"/>
        <end position="242"/>
    </location>
</feature>
<feature type="repeat" description="31" evidence="11">
    <location>
        <begin position="243"/>
        <end position="246"/>
    </location>
</feature>
<feature type="repeat" description="32" evidence="11">
    <location>
        <begin position="247"/>
        <end position="250"/>
    </location>
</feature>
<feature type="repeat" description="33" evidence="11">
    <location>
        <begin position="251"/>
        <end position="254"/>
    </location>
</feature>
<feature type="repeat" description="34" evidence="11">
    <location>
        <begin position="255"/>
        <end position="258"/>
    </location>
</feature>
<feature type="repeat" description="35" evidence="11">
    <location>
        <begin position="259"/>
        <end position="262"/>
    </location>
</feature>
<feature type="repeat" description="36" evidence="11">
    <location>
        <begin position="263"/>
        <end position="266"/>
    </location>
</feature>
<feature type="repeat" description="37" evidence="11">
    <location>
        <begin position="267"/>
        <end position="270"/>
    </location>
</feature>
<feature type="repeat" description="38" evidence="11">
    <location>
        <begin position="271"/>
        <end position="274"/>
    </location>
</feature>
<feature type="repeat" description="39" evidence="11">
    <location>
        <begin position="275"/>
        <end position="278"/>
    </location>
</feature>
<feature type="repeat" description="40" evidence="11">
    <location>
        <begin position="279"/>
        <end position="282"/>
    </location>
</feature>
<feature type="repeat" description="41" evidence="11">
    <location>
        <begin position="283"/>
        <end position="286"/>
    </location>
</feature>
<feature type="repeat" description="42" evidence="11">
    <location>
        <begin position="287"/>
        <end position="290"/>
    </location>
</feature>
<feature type="repeat" description="43" evidence="11">
    <location>
        <begin position="291"/>
        <end position="294"/>
    </location>
</feature>
<feature type="repeat" description="44" evidence="11">
    <location>
        <begin position="295"/>
        <end position="298"/>
    </location>
</feature>
<feature type="domain" description="TSP type-1" evidence="6">
    <location>
        <begin position="349"/>
        <end position="402"/>
    </location>
</feature>
<feature type="region of interest" description="Disordered" evidence="7">
    <location>
        <begin position="69"/>
        <end position="339"/>
    </location>
</feature>
<feature type="region of interest" description="Required for the binding to heparan sulfate proteoglycans (HSPGs) on the surface of host hepatocytes" evidence="4">
    <location>
        <begin position="104"/>
        <end position="111"/>
    </location>
</feature>
<feature type="region of interest" description="Region I; contains the proteolytic cleavage site" evidence="3">
    <location>
        <begin position="112"/>
        <end position="116"/>
    </location>
</feature>
<feature type="region of interest" description="44 X 4 AA tandem repeats of P-N-[AV]-[ND]" evidence="11">
    <location>
        <begin position="123"/>
        <end position="298"/>
    </location>
</feature>
<feature type="compositionally biased region" description="Basic and acidic residues" evidence="7">
    <location>
        <begin position="85"/>
        <end position="106"/>
    </location>
</feature>
<feature type="compositionally biased region" description="Low complexity" evidence="7">
    <location>
        <begin position="120"/>
        <end position="300"/>
    </location>
</feature>
<feature type="compositionally biased region" description="Polar residues" evidence="7">
    <location>
        <begin position="301"/>
        <end position="316"/>
    </location>
</feature>
<feature type="compositionally biased region" description="Low complexity" evidence="7">
    <location>
        <begin position="322"/>
        <end position="336"/>
    </location>
</feature>
<feature type="lipid moiety-binding region" description="GPI-anchor amidated cysteine" evidence="5">
    <location>
        <position position="401"/>
    </location>
</feature>
<feature type="glycosylation site" description="O-linked (Fuc) threonine" evidence="2">
    <location>
        <position position="364"/>
    </location>
</feature>
<feature type="disulfide bond" evidence="4">
    <location>
        <begin position="361"/>
        <end position="396"/>
    </location>
</feature>
<feature type="disulfide bond" evidence="4">
    <location>
        <begin position="365"/>
        <end position="401"/>
    </location>
</feature>
<proteinExistence type="inferred from homology"/>
<name>CSP_PLAFT</name>
<dbReference type="EMBL" id="M19752">
    <property type="protein sequence ID" value="AAA29555.1"/>
    <property type="molecule type" value="Genomic_DNA"/>
</dbReference>
<dbReference type="PIR" id="A54533">
    <property type="entry name" value="A54533"/>
</dbReference>
<dbReference type="SMR" id="P13814"/>
<dbReference type="GlyCosmos" id="P13814">
    <property type="glycosylation" value="1 site, No reported glycans"/>
</dbReference>
<dbReference type="GO" id="GO:0009986">
    <property type="term" value="C:cell surface"/>
    <property type="evidence" value="ECO:0007669"/>
    <property type="project" value="InterPro"/>
</dbReference>
<dbReference type="GO" id="GO:0005737">
    <property type="term" value="C:cytoplasm"/>
    <property type="evidence" value="ECO:0007669"/>
    <property type="project" value="UniProtKB-SubCell"/>
</dbReference>
<dbReference type="GO" id="GO:0005886">
    <property type="term" value="C:plasma membrane"/>
    <property type="evidence" value="ECO:0007669"/>
    <property type="project" value="UniProtKB-SubCell"/>
</dbReference>
<dbReference type="GO" id="GO:0098552">
    <property type="term" value="C:side of membrane"/>
    <property type="evidence" value="ECO:0007669"/>
    <property type="project" value="UniProtKB-KW"/>
</dbReference>
<dbReference type="Gene3D" id="2.20.100.10">
    <property type="entry name" value="Thrombospondin type-1 (TSP1) repeat"/>
    <property type="match status" value="1"/>
</dbReference>
<dbReference type="InterPro" id="IPR003067">
    <property type="entry name" value="Crcmsprzoite"/>
</dbReference>
<dbReference type="InterPro" id="IPR051860">
    <property type="entry name" value="Plasmodium_CSP_Invasion"/>
</dbReference>
<dbReference type="InterPro" id="IPR000884">
    <property type="entry name" value="TSP1_rpt"/>
</dbReference>
<dbReference type="InterPro" id="IPR036383">
    <property type="entry name" value="TSP1_rpt_sf"/>
</dbReference>
<dbReference type="PANTHER" id="PTHR44826">
    <property type="entry name" value="SPORE COAT PROTEIN SP85"/>
    <property type="match status" value="1"/>
</dbReference>
<dbReference type="PANTHER" id="PTHR44826:SF3">
    <property type="entry name" value="SPORE COAT PROTEIN SP85"/>
    <property type="match status" value="1"/>
</dbReference>
<dbReference type="Pfam" id="PF00090">
    <property type="entry name" value="TSP_1"/>
    <property type="match status" value="1"/>
</dbReference>
<dbReference type="PRINTS" id="PR01303">
    <property type="entry name" value="CRCMSPRZOITE"/>
</dbReference>
<dbReference type="SMART" id="SM00209">
    <property type="entry name" value="TSP1"/>
    <property type="match status" value="1"/>
</dbReference>
<dbReference type="SUPFAM" id="SSF82895">
    <property type="entry name" value="TSP-1 type 1 repeat"/>
    <property type="match status" value="1"/>
</dbReference>
<dbReference type="PROSITE" id="PS50092">
    <property type="entry name" value="TSP1"/>
    <property type="match status" value="1"/>
</dbReference>
<sequence>MMRKLAILSVSSFLFVEALFQEYQCYGSSSNTRVLNELNYDNAGTNLYNELEMNYYGKQENWYSLKKNSRSLGENDDGNNNNGDNNREGKDEDKRDGNNEDNETLRKPKHKKLKQPGDGNPDPNANPNVDPNANPNVDPNANPNVDPNANPNANPNANPNANPNANPNANPNANPNANPNANPNANPNANPNANPNANPNANPNANPNANPNANPNANPNANPNANPNANPNANPNANPNANPNANPNANPNANPNANPNANPNANPNANPNANPNANPNANPNANPNANPNANPNANPNKNNQGNGQGHNMPNDPNRNVDENANANNAVKNNNNEEPSDKHIEQYLKKIQNSLSTEWSPCSVTCGNGIQVRIKPGSANKPKDELDYENDIEKKICKMEKCSSVFNVVNSSIGLIMVLSFLFLN</sequence>
<keyword id="KW-1003">Cell membrane</keyword>
<keyword id="KW-0963">Cytoplasm</keyword>
<keyword id="KW-1015">Disulfide bond</keyword>
<keyword id="KW-0325">Glycoprotein</keyword>
<keyword id="KW-0336">GPI-anchor</keyword>
<keyword id="KW-0449">Lipoprotein</keyword>
<keyword id="KW-0461">Malaria</keyword>
<keyword id="KW-0472">Membrane</keyword>
<keyword id="KW-0677">Repeat</keyword>
<keyword id="KW-0732">Signal</keyword>
<keyword id="KW-0748">Sporozoite</keyword>
<accession>P13814</accession>
<gene>
    <name evidence="3" type="primary">CSP</name>
</gene>
<reference key="1">
    <citation type="journal article" date="1987" name="Mol. Biochem. Parasitol.">
        <title>Circumsporozoite gene of a Plasmodium falciparum strain from Thailand.</title>
        <authorList>
            <person name="del Portillo H.A."/>
            <person name="Nussenzweig R.S."/>
            <person name="Enea V."/>
        </authorList>
    </citation>
    <scope>NUCLEOTIDE SEQUENCE [GENOMIC DNA]</scope>
    <scope>POLYMORPHISM</scope>
    <scope>REPEATS</scope>
</reference>
<organism>
    <name type="scientific">Plasmodium falciparum (isolate t4 / Thailand)</name>
    <dbReference type="NCBI Taxonomy" id="5846"/>
    <lineage>
        <taxon>Eukaryota</taxon>
        <taxon>Sar</taxon>
        <taxon>Alveolata</taxon>
        <taxon>Apicomplexa</taxon>
        <taxon>Aconoidasida</taxon>
        <taxon>Haemosporida</taxon>
        <taxon>Plasmodiidae</taxon>
        <taxon>Plasmodium</taxon>
        <taxon>Plasmodium (Laverania)</taxon>
    </lineage>
</organism>
<protein>
    <recommendedName>
        <fullName evidence="9">Circumsporozoite protein</fullName>
        <shortName evidence="9">CS</shortName>
    </recommendedName>
    <component>
        <recommendedName>
            <fullName evidence="10">Circumsporozoite protein C-terminus</fullName>
        </recommendedName>
    </component>
</protein>